<proteinExistence type="inferred from homology"/>
<evidence type="ECO:0000255" key="1">
    <source>
        <dbReference type="HAMAP-Rule" id="MF_00480"/>
    </source>
</evidence>
<evidence type="ECO:0000305" key="2"/>
<comment type="function">
    <text evidence="1">One of the primary rRNA binding proteins, it binds directly to 16S rRNA where it nucleates assembly of the head domain of the 30S subunit. Is located at the subunit interface close to the decoding center, probably blocks exit of the E-site tRNA.</text>
</comment>
<comment type="subunit">
    <text evidence="1">Part of the 30S ribosomal subunit. Contacts proteins S9 and S11.</text>
</comment>
<comment type="similarity">
    <text evidence="1">Belongs to the universal ribosomal protein uS7 family.</text>
</comment>
<keyword id="KW-1185">Reference proteome</keyword>
<keyword id="KW-0687">Ribonucleoprotein</keyword>
<keyword id="KW-0689">Ribosomal protein</keyword>
<keyword id="KW-0694">RNA-binding</keyword>
<keyword id="KW-0699">rRNA-binding</keyword>
<keyword id="KW-0820">tRNA-binding</keyword>
<sequence length="156" mass="17714">MPRKGHIAKRDVLPDPLYNSKVVTKLINSIMLDGKRGVAQKICYDAFEIIAEKSGKDAMEVFETAMNNIMPLLEVKARRIGGATYQVPIEVRPERRQTLGIRWMLIAARKRGERSMRERLAGELLDASNNTGAAVKKREDTHKMAEANKAFAHYRY</sequence>
<feature type="chain" id="PRO_1000014176" description="Small ribosomal subunit protein uS7">
    <location>
        <begin position="1"/>
        <end position="156"/>
    </location>
</feature>
<dbReference type="EMBL" id="CP000727">
    <property type="protein sequence ID" value="ABS37344.1"/>
    <property type="molecule type" value="Genomic_DNA"/>
</dbReference>
<dbReference type="EMBL" id="AM412317">
    <property type="protein sequence ID" value="CAL85045.1"/>
    <property type="molecule type" value="Genomic_DNA"/>
</dbReference>
<dbReference type="RefSeq" id="WP_003357613.1">
    <property type="nucleotide sequence ID" value="NC_009698.1"/>
</dbReference>
<dbReference type="RefSeq" id="YP_001255966.1">
    <property type="nucleotide sequence ID" value="NC_009495.1"/>
</dbReference>
<dbReference type="RefSeq" id="YP_001389207.1">
    <property type="nucleotide sequence ID" value="NC_009698.1"/>
</dbReference>
<dbReference type="SMR" id="A5I7L0"/>
<dbReference type="GeneID" id="92940254"/>
<dbReference type="KEGG" id="cbh:CLC_3429"/>
<dbReference type="KEGG" id="cbo:CBO3484"/>
<dbReference type="PATRIC" id="fig|413999.7.peg.3461"/>
<dbReference type="HOGENOM" id="CLU_072226_1_1_9"/>
<dbReference type="PRO" id="PR:A5I7L0"/>
<dbReference type="Proteomes" id="UP000001986">
    <property type="component" value="Chromosome"/>
</dbReference>
<dbReference type="GO" id="GO:0022627">
    <property type="term" value="C:cytosolic small ribosomal subunit"/>
    <property type="evidence" value="ECO:0000318"/>
    <property type="project" value="GO_Central"/>
</dbReference>
<dbReference type="GO" id="GO:0005840">
    <property type="term" value="C:ribosome"/>
    <property type="evidence" value="ECO:0000318"/>
    <property type="project" value="GO_Central"/>
</dbReference>
<dbReference type="GO" id="GO:0003729">
    <property type="term" value="F:mRNA binding"/>
    <property type="evidence" value="ECO:0000318"/>
    <property type="project" value="GO_Central"/>
</dbReference>
<dbReference type="GO" id="GO:0019843">
    <property type="term" value="F:rRNA binding"/>
    <property type="evidence" value="ECO:0000318"/>
    <property type="project" value="GO_Central"/>
</dbReference>
<dbReference type="GO" id="GO:0003735">
    <property type="term" value="F:structural constituent of ribosome"/>
    <property type="evidence" value="ECO:0000318"/>
    <property type="project" value="GO_Central"/>
</dbReference>
<dbReference type="GO" id="GO:0000049">
    <property type="term" value="F:tRNA binding"/>
    <property type="evidence" value="ECO:0007669"/>
    <property type="project" value="UniProtKB-UniRule"/>
</dbReference>
<dbReference type="GO" id="GO:0000028">
    <property type="term" value="P:ribosomal small subunit assembly"/>
    <property type="evidence" value="ECO:0000318"/>
    <property type="project" value="GO_Central"/>
</dbReference>
<dbReference type="GO" id="GO:0006412">
    <property type="term" value="P:translation"/>
    <property type="evidence" value="ECO:0000318"/>
    <property type="project" value="GO_Central"/>
</dbReference>
<dbReference type="CDD" id="cd14869">
    <property type="entry name" value="uS7_Bacteria"/>
    <property type="match status" value="1"/>
</dbReference>
<dbReference type="FunFam" id="1.10.455.10:FF:000001">
    <property type="entry name" value="30S ribosomal protein S7"/>
    <property type="match status" value="1"/>
</dbReference>
<dbReference type="Gene3D" id="1.10.455.10">
    <property type="entry name" value="Ribosomal protein S7 domain"/>
    <property type="match status" value="1"/>
</dbReference>
<dbReference type="HAMAP" id="MF_00480_B">
    <property type="entry name" value="Ribosomal_uS7_B"/>
    <property type="match status" value="1"/>
</dbReference>
<dbReference type="InterPro" id="IPR000235">
    <property type="entry name" value="Ribosomal_uS7"/>
</dbReference>
<dbReference type="InterPro" id="IPR005717">
    <property type="entry name" value="Ribosomal_uS7_bac/org-type"/>
</dbReference>
<dbReference type="InterPro" id="IPR020606">
    <property type="entry name" value="Ribosomal_uS7_CS"/>
</dbReference>
<dbReference type="InterPro" id="IPR023798">
    <property type="entry name" value="Ribosomal_uS7_dom"/>
</dbReference>
<dbReference type="InterPro" id="IPR036823">
    <property type="entry name" value="Ribosomal_uS7_dom_sf"/>
</dbReference>
<dbReference type="NCBIfam" id="TIGR01029">
    <property type="entry name" value="rpsG_bact"/>
    <property type="match status" value="1"/>
</dbReference>
<dbReference type="PANTHER" id="PTHR11205">
    <property type="entry name" value="RIBOSOMAL PROTEIN S7"/>
    <property type="match status" value="1"/>
</dbReference>
<dbReference type="Pfam" id="PF00177">
    <property type="entry name" value="Ribosomal_S7"/>
    <property type="match status" value="1"/>
</dbReference>
<dbReference type="PIRSF" id="PIRSF002122">
    <property type="entry name" value="RPS7p_RPS7a_RPS5e_RPS7o"/>
    <property type="match status" value="1"/>
</dbReference>
<dbReference type="SUPFAM" id="SSF47973">
    <property type="entry name" value="Ribosomal protein S7"/>
    <property type="match status" value="1"/>
</dbReference>
<dbReference type="PROSITE" id="PS00052">
    <property type="entry name" value="RIBOSOMAL_S7"/>
    <property type="match status" value="1"/>
</dbReference>
<reference key="1">
    <citation type="journal article" date="2007" name="Genome Res.">
        <title>Genome sequence of a proteolytic (Group I) Clostridium botulinum strain Hall A and comparative analysis of the clostridial genomes.</title>
        <authorList>
            <person name="Sebaihia M."/>
            <person name="Peck M.W."/>
            <person name="Minton N.P."/>
            <person name="Thomson N.R."/>
            <person name="Holden M.T.G."/>
            <person name="Mitchell W.J."/>
            <person name="Carter A.T."/>
            <person name="Bentley S.D."/>
            <person name="Mason D.R."/>
            <person name="Crossman L."/>
            <person name="Paul C.J."/>
            <person name="Ivens A."/>
            <person name="Wells-Bennik M.H.J."/>
            <person name="Davis I.J."/>
            <person name="Cerdeno-Tarraga A.M."/>
            <person name="Churcher C."/>
            <person name="Quail M.A."/>
            <person name="Chillingworth T."/>
            <person name="Feltwell T."/>
            <person name="Fraser A."/>
            <person name="Goodhead I."/>
            <person name="Hance Z."/>
            <person name="Jagels K."/>
            <person name="Larke N."/>
            <person name="Maddison M."/>
            <person name="Moule S."/>
            <person name="Mungall K."/>
            <person name="Norbertczak H."/>
            <person name="Rabbinowitsch E."/>
            <person name="Sanders M."/>
            <person name="Simmonds M."/>
            <person name="White B."/>
            <person name="Whithead S."/>
            <person name="Parkhill J."/>
        </authorList>
    </citation>
    <scope>NUCLEOTIDE SEQUENCE [LARGE SCALE GENOMIC DNA]</scope>
    <source>
        <strain>Hall / ATCC 3502 / NCTC 13319 / Type A</strain>
    </source>
</reference>
<reference key="2">
    <citation type="journal article" date="2007" name="PLoS ONE">
        <title>Analysis of the neurotoxin complex genes in Clostridium botulinum A1-A4 and B1 strains: BoNT/A3, /Ba4 and /B1 clusters are located within plasmids.</title>
        <authorList>
            <person name="Smith T.J."/>
            <person name="Hill K.K."/>
            <person name="Foley B.T."/>
            <person name="Detter J.C."/>
            <person name="Munk A.C."/>
            <person name="Bruce D.C."/>
            <person name="Doggett N.A."/>
            <person name="Smith L.A."/>
            <person name="Marks J.D."/>
            <person name="Xie G."/>
            <person name="Brettin T.S."/>
        </authorList>
    </citation>
    <scope>NUCLEOTIDE SEQUENCE [LARGE SCALE GENOMIC DNA]</scope>
    <source>
        <strain>Hall / ATCC 3502 / NCTC 13319 / Type A</strain>
    </source>
</reference>
<organism>
    <name type="scientific">Clostridium botulinum (strain Hall / ATCC 3502 / NCTC 13319 / Type A)</name>
    <dbReference type="NCBI Taxonomy" id="441771"/>
    <lineage>
        <taxon>Bacteria</taxon>
        <taxon>Bacillati</taxon>
        <taxon>Bacillota</taxon>
        <taxon>Clostridia</taxon>
        <taxon>Eubacteriales</taxon>
        <taxon>Clostridiaceae</taxon>
        <taxon>Clostridium</taxon>
    </lineage>
</organism>
<protein>
    <recommendedName>
        <fullName evidence="1">Small ribosomal subunit protein uS7</fullName>
    </recommendedName>
    <alternativeName>
        <fullName evidence="2">30S ribosomal protein S7</fullName>
    </alternativeName>
</protein>
<gene>
    <name evidence="1" type="primary">rpsG</name>
    <name type="ordered locus">CBO3484</name>
    <name type="ordered locus">CLC_3429</name>
</gene>
<name>RS7_CLOBH</name>
<accession>A5I7L0</accession>
<accession>A7G8U2</accession>